<feature type="chain" id="PRO_0000196058" description="Small ribosomal subunit protein bS1A">
    <location>
        <begin position="1"/>
        <end position="328"/>
    </location>
</feature>
<feature type="domain" description="S1 motif 1" evidence="1">
    <location>
        <begin position="31"/>
        <end position="100"/>
    </location>
</feature>
<feature type="domain" description="S1 motif 2" evidence="1">
    <location>
        <begin position="118"/>
        <end position="182"/>
    </location>
</feature>
<feature type="domain" description="S1 motif 3" evidence="1">
    <location>
        <begin position="196"/>
        <end position="264"/>
    </location>
</feature>
<feature type="region of interest" description="Disordered" evidence="2">
    <location>
        <begin position="298"/>
        <end position="328"/>
    </location>
</feature>
<feature type="compositionally biased region" description="Acidic residues" evidence="2">
    <location>
        <begin position="311"/>
        <end position="328"/>
    </location>
</feature>
<protein>
    <recommendedName>
        <fullName evidence="3">Small ribosomal subunit protein bS1A</fullName>
    </recommendedName>
    <alternativeName>
        <fullName evidence="3">30S ribosomal protein S1 A</fullName>
    </alternativeName>
</protein>
<organism>
    <name type="scientific">Synechocystis sp. (strain ATCC 27184 / PCC 6803 / Kazusa)</name>
    <dbReference type="NCBI Taxonomy" id="1111708"/>
    <lineage>
        <taxon>Bacteria</taxon>
        <taxon>Bacillati</taxon>
        <taxon>Cyanobacteriota</taxon>
        <taxon>Cyanophyceae</taxon>
        <taxon>Synechococcales</taxon>
        <taxon>Merismopediaceae</taxon>
        <taxon>Synechocystis</taxon>
    </lineage>
</organism>
<gene>
    <name type="primary">rps1A</name>
    <name type="ordered locus">slr1356</name>
</gene>
<sequence length="328" mass="36570">MVSQTSTATIGFTLEDFAALLDKYDYHFSPGDIVAGTVFSMESRGALIDIGAKTAAYIPIQEMSINRVDDPEEVLQPNETREFFILTDENEDGQLTLSIRRIEYMRAWERVRQLQAEDATVRSNVFATNRGGALVRIEGLRGFIPGSHISAREAKEDLVGEDLPLKFLEVDEERNRLVLSHRRALVERKMNGLEVAQVVVGSVRGIKPYGAFIDIGGVSGLLHISEISHDHIDTPHSVFNVNDEIKVMIIDLDAERGRISLSTKQLEPEPGAMLKDRDLVNEMADEMAEIFRQKRLAEAQGIPYEPPTSVDDTDDEEDESLAVSAVDE</sequence>
<comment type="function">
    <text>Binds mRNA.</text>
</comment>
<comment type="similarity">
    <text evidence="3">Belongs to the bacterial ribosomal protein bS1 family.</text>
</comment>
<accession>P73530</accession>
<dbReference type="EMBL" id="BA000022">
    <property type="protein sequence ID" value="BAA17570.1"/>
    <property type="molecule type" value="Genomic_DNA"/>
</dbReference>
<dbReference type="PIR" id="S77236">
    <property type="entry name" value="S77236"/>
</dbReference>
<dbReference type="SMR" id="P73530"/>
<dbReference type="FunCoup" id="P73530">
    <property type="interactions" value="545"/>
</dbReference>
<dbReference type="IntAct" id="P73530">
    <property type="interactions" value="3"/>
</dbReference>
<dbReference type="STRING" id="1148.gene:10498437"/>
<dbReference type="PaxDb" id="1148-1652650"/>
<dbReference type="EnsemblBacteria" id="BAA17570">
    <property type="protein sequence ID" value="BAA17570"/>
    <property type="gene ID" value="BAA17570"/>
</dbReference>
<dbReference type="KEGG" id="syn:slr1356"/>
<dbReference type="eggNOG" id="COG0539">
    <property type="taxonomic scope" value="Bacteria"/>
</dbReference>
<dbReference type="InParanoid" id="P73530"/>
<dbReference type="PhylomeDB" id="P73530"/>
<dbReference type="Proteomes" id="UP000001425">
    <property type="component" value="Chromosome"/>
</dbReference>
<dbReference type="GO" id="GO:1990904">
    <property type="term" value="C:ribonucleoprotein complex"/>
    <property type="evidence" value="ECO:0007669"/>
    <property type="project" value="UniProtKB-KW"/>
</dbReference>
<dbReference type="GO" id="GO:0005840">
    <property type="term" value="C:ribosome"/>
    <property type="evidence" value="ECO:0007669"/>
    <property type="project" value="UniProtKB-KW"/>
</dbReference>
<dbReference type="GO" id="GO:0003729">
    <property type="term" value="F:mRNA binding"/>
    <property type="evidence" value="ECO:0000318"/>
    <property type="project" value="GO_Central"/>
</dbReference>
<dbReference type="GO" id="GO:0003735">
    <property type="term" value="F:structural constituent of ribosome"/>
    <property type="evidence" value="ECO:0000318"/>
    <property type="project" value="GO_Central"/>
</dbReference>
<dbReference type="GO" id="GO:0006412">
    <property type="term" value="P:translation"/>
    <property type="evidence" value="ECO:0000318"/>
    <property type="project" value="GO_Central"/>
</dbReference>
<dbReference type="CDD" id="cd05687">
    <property type="entry name" value="S1_RPS1_repeat_ec1_hs1"/>
    <property type="match status" value="1"/>
</dbReference>
<dbReference type="CDD" id="cd04465">
    <property type="entry name" value="S1_RPS1_repeat_ec2_hs2"/>
    <property type="match status" value="1"/>
</dbReference>
<dbReference type="CDD" id="cd05688">
    <property type="entry name" value="S1_RPS1_repeat_ec3"/>
    <property type="match status" value="1"/>
</dbReference>
<dbReference type="FunFam" id="2.40.50.140:FF:000078">
    <property type="entry name" value="30S ribosomal protein S1"/>
    <property type="match status" value="1"/>
</dbReference>
<dbReference type="FunFam" id="2.40.50.140:FF:000102">
    <property type="entry name" value="30S ribosomal protein S1"/>
    <property type="match status" value="1"/>
</dbReference>
<dbReference type="FunFam" id="2.40.50.140:FF:000126">
    <property type="entry name" value="30S ribosomal protein S1"/>
    <property type="match status" value="1"/>
</dbReference>
<dbReference type="Gene3D" id="2.40.50.140">
    <property type="entry name" value="Nucleic acid-binding proteins"/>
    <property type="match status" value="3"/>
</dbReference>
<dbReference type="InterPro" id="IPR012340">
    <property type="entry name" value="NA-bd_OB-fold"/>
</dbReference>
<dbReference type="InterPro" id="IPR050437">
    <property type="entry name" value="Ribos_protein_bS1-like"/>
</dbReference>
<dbReference type="InterPro" id="IPR035104">
    <property type="entry name" value="Ribosomal_protein_S1-like"/>
</dbReference>
<dbReference type="InterPro" id="IPR003029">
    <property type="entry name" value="S1_domain"/>
</dbReference>
<dbReference type="NCBIfam" id="NF005639">
    <property type="entry name" value="PRK07400.1"/>
    <property type="match status" value="1"/>
</dbReference>
<dbReference type="PANTHER" id="PTHR10724">
    <property type="entry name" value="30S RIBOSOMAL PROTEIN S1"/>
    <property type="match status" value="1"/>
</dbReference>
<dbReference type="PANTHER" id="PTHR10724:SF7">
    <property type="entry name" value="SMALL RIBOSOMAL SUBUNIT PROTEIN BS1C"/>
    <property type="match status" value="1"/>
</dbReference>
<dbReference type="Pfam" id="PF00575">
    <property type="entry name" value="S1"/>
    <property type="match status" value="3"/>
</dbReference>
<dbReference type="PRINTS" id="PR00681">
    <property type="entry name" value="RIBOSOMALS1"/>
</dbReference>
<dbReference type="SMART" id="SM00316">
    <property type="entry name" value="S1"/>
    <property type="match status" value="3"/>
</dbReference>
<dbReference type="SUPFAM" id="SSF50249">
    <property type="entry name" value="Nucleic acid-binding proteins"/>
    <property type="match status" value="3"/>
</dbReference>
<dbReference type="PROSITE" id="PS50126">
    <property type="entry name" value="S1"/>
    <property type="match status" value="3"/>
</dbReference>
<reference key="1">
    <citation type="journal article" date="1996" name="DNA Res.">
        <title>Sequence analysis of the genome of the unicellular cyanobacterium Synechocystis sp. strain PCC6803. II. Sequence determination of the entire genome and assignment of potential protein-coding regions.</title>
        <authorList>
            <person name="Kaneko T."/>
            <person name="Sato S."/>
            <person name="Kotani H."/>
            <person name="Tanaka A."/>
            <person name="Asamizu E."/>
            <person name="Nakamura Y."/>
            <person name="Miyajima N."/>
            <person name="Hirosawa M."/>
            <person name="Sugiura M."/>
            <person name="Sasamoto S."/>
            <person name="Kimura T."/>
            <person name="Hosouchi T."/>
            <person name="Matsuno A."/>
            <person name="Muraki A."/>
            <person name="Nakazaki N."/>
            <person name="Naruo K."/>
            <person name="Okumura S."/>
            <person name="Shimpo S."/>
            <person name="Takeuchi C."/>
            <person name="Wada T."/>
            <person name="Watanabe A."/>
            <person name="Yamada M."/>
            <person name="Yasuda M."/>
            <person name="Tabata S."/>
        </authorList>
    </citation>
    <scope>NUCLEOTIDE SEQUENCE [LARGE SCALE GENOMIC DNA]</scope>
    <source>
        <strain>ATCC 27184 / PCC 6803 / Kazusa</strain>
    </source>
</reference>
<keyword id="KW-1185">Reference proteome</keyword>
<keyword id="KW-0677">Repeat</keyword>
<keyword id="KW-0687">Ribonucleoprotein</keyword>
<keyword id="KW-0689">Ribosomal protein</keyword>
<keyword id="KW-0694">RNA-binding</keyword>
<proteinExistence type="inferred from homology"/>
<name>RS1A_SYNY3</name>
<evidence type="ECO:0000255" key="1">
    <source>
        <dbReference type="PROSITE-ProRule" id="PRU00180"/>
    </source>
</evidence>
<evidence type="ECO:0000256" key="2">
    <source>
        <dbReference type="SAM" id="MobiDB-lite"/>
    </source>
</evidence>
<evidence type="ECO:0000305" key="3"/>